<reference key="1">
    <citation type="journal article" date="2001" name="Mol. Phylogenet. Evol.">
        <title>Retrieval of four adaptive lineages in duiker antelope: evidence from mitochondrial DNA sequences and fluorescence in situ hybridization.</title>
        <authorList>
            <person name="van Vuuren B.J."/>
            <person name="Robinson T.J."/>
        </authorList>
    </citation>
    <scope>NUCLEOTIDE SEQUENCE [GENOMIC DNA]</scope>
</reference>
<accession>Q9B5Q4</accession>
<comment type="function">
    <text evidence="2">Component of the ubiquinol-cytochrome c reductase complex (complex III or cytochrome b-c1 complex) that is part of the mitochondrial respiratory chain. The b-c1 complex mediates electron transfer from ubiquinol to cytochrome c. Contributes to the generation of a proton gradient across the mitochondrial membrane that is then used for ATP synthesis.</text>
</comment>
<comment type="cofactor">
    <cofactor evidence="2">
        <name>heme b</name>
        <dbReference type="ChEBI" id="CHEBI:60344"/>
    </cofactor>
    <text evidence="2">Binds 2 heme b groups non-covalently.</text>
</comment>
<comment type="subunit">
    <text evidence="2">The cytochrome bc1 complex contains 11 subunits: 3 respiratory subunits (MT-CYB, CYC1 and UQCRFS1), 2 core proteins (UQCRC1 and UQCRC2) and 6 low-molecular weight proteins (UQCRH/QCR6, UQCRB/QCR7, UQCRQ/QCR8, UQCR10/QCR9, UQCR11/QCR10 and a cleavage product of UQCRFS1). This cytochrome bc1 complex then forms a dimer.</text>
</comment>
<comment type="subcellular location">
    <subcellularLocation>
        <location evidence="2">Mitochondrion inner membrane</location>
        <topology evidence="2">Multi-pass membrane protein</topology>
    </subcellularLocation>
</comment>
<comment type="miscellaneous">
    <text evidence="1">Heme 1 (or BL or b562) is low-potential and absorbs at about 562 nm, and heme 2 (or BH or b566) is high-potential and absorbs at about 566 nm.</text>
</comment>
<comment type="similarity">
    <text evidence="3 4">Belongs to the cytochrome b family.</text>
</comment>
<comment type="caution">
    <text evidence="2">The full-length protein contains only eight transmembrane helices, not nine as predicted by bioinformatics tools.</text>
</comment>
<organism>
    <name type="scientific">Cephalophorus weynsi</name>
    <name type="common">Weyns' duiker</name>
    <name type="synonym">Cephalophus weynsi</name>
    <dbReference type="NCBI Taxonomy" id="129232"/>
    <lineage>
        <taxon>Eukaryota</taxon>
        <taxon>Metazoa</taxon>
        <taxon>Chordata</taxon>
        <taxon>Craniata</taxon>
        <taxon>Vertebrata</taxon>
        <taxon>Euteleostomi</taxon>
        <taxon>Mammalia</taxon>
        <taxon>Eutheria</taxon>
        <taxon>Laurasiatheria</taxon>
        <taxon>Artiodactyla</taxon>
        <taxon>Ruminantia</taxon>
        <taxon>Pecora</taxon>
        <taxon>Bovidae</taxon>
        <taxon>Cephalophinae</taxon>
        <taxon>Cephalophorus</taxon>
    </lineage>
</organism>
<protein>
    <recommendedName>
        <fullName>Cytochrome b</fullName>
    </recommendedName>
    <alternativeName>
        <fullName>Complex III subunit 3</fullName>
    </alternativeName>
    <alternativeName>
        <fullName>Complex III subunit III</fullName>
    </alternativeName>
    <alternativeName>
        <fullName>Cytochrome b-c1 complex subunit 3</fullName>
    </alternativeName>
    <alternativeName>
        <fullName>Ubiquinol-cytochrome-c reductase complex cytochrome b subunit</fullName>
    </alternativeName>
</protein>
<feature type="chain" id="PRO_0000254675" description="Cytochrome b">
    <location>
        <begin position="1"/>
        <end position="379"/>
    </location>
</feature>
<feature type="transmembrane region" description="Helical" evidence="2">
    <location>
        <begin position="33"/>
        <end position="53"/>
    </location>
</feature>
<feature type="transmembrane region" description="Helical" evidence="2">
    <location>
        <begin position="77"/>
        <end position="98"/>
    </location>
</feature>
<feature type="transmembrane region" description="Helical" evidence="2">
    <location>
        <begin position="113"/>
        <end position="133"/>
    </location>
</feature>
<feature type="transmembrane region" description="Helical" evidence="2">
    <location>
        <begin position="178"/>
        <end position="198"/>
    </location>
</feature>
<feature type="transmembrane region" description="Helical" evidence="2">
    <location>
        <begin position="226"/>
        <end position="246"/>
    </location>
</feature>
<feature type="transmembrane region" description="Helical" evidence="2">
    <location>
        <begin position="288"/>
        <end position="308"/>
    </location>
</feature>
<feature type="transmembrane region" description="Helical" evidence="2">
    <location>
        <begin position="320"/>
        <end position="340"/>
    </location>
</feature>
<feature type="transmembrane region" description="Helical" evidence="2">
    <location>
        <begin position="347"/>
        <end position="367"/>
    </location>
</feature>
<feature type="binding site" description="axial binding residue" evidence="2">
    <location>
        <position position="83"/>
    </location>
    <ligand>
        <name>heme b</name>
        <dbReference type="ChEBI" id="CHEBI:60344"/>
        <label>b562</label>
    </ligand>
    <ligandPart>
        <name>Fe</name>
        <dbReference type="ChEBI" id="CHEBI:18248"/>
    </ligandPart>
</feature>
<feature type="binding site" description="axial binding residue" evidence="2">
    <location>
        <position position="97"/>
    </location>
    <ligand>
        <name>heme b</name>
        <dbReference type="ChEBI" id="CHEBI:60344"/>
        <label>b566</label>
    </ligand>
    <ligandPart>
        <name>Fe</name>
        <dbReference type="ChEBI" id="CHEBI:18248"/>
    </ligandPart>
</feature>
<feature type="binding site" description="axial binding residue" evidence="2">
    <location>
        <position position="182"/>
    </location>
    <ligand>
        <name>heme b</name>
        <dbReference type="ChEBI" id="CHEBI:60344"/>
        <label>b562</label>
    </ligand>
    <ligandPart>
        <name>Fe</name>
        <dbReference type="ChEBI" id="CHEBI:18248"/>
    </ligandPart>
</feature>
<feature type="binding site" description="axial binding residue" evidence="2">
    <location>
        <position position="196"/>
    </location>
    <ligand>
        <name>heme b</name>
        <dbReference type="ChEBI" id="CHEBI:60344"/>
        <label>b566</label>
    </ligand>
    <ligandPart>
        <name>Fe</name>
        <dbReference type="ChEBI" id="CHEBI:18248"/>
    </ligandPart>
</feature>
<feature type="binding site" evidence="2">
    <location>
        <position position="201"/>
    </location>
    <ligand>
        <name>a ubiquinone</name>
        <dbReference type="ChEBI" id="CHEBI:16389"/>
    </ligand>
</feature>
<gene>
    <name type="primary">MT-CYB</name>
    <name type="synonym">COB</name>
    <name type="synonym">CYTB</name>
    <name type="synonym">MTCYB</name>
</gene>
<proteinExistence type="inferred from homology"/>
<evidence type="ECO:0000250" key="1"/>
<evidence type="ECO:0000250" key="2">
    <source>
        <dbReference type="UniProtKB" id="P00157"/>
    </source>
</evidence>
<evidence type="ECO:0000255" key="3">
    <source>
        <dbReference type="PROSITE-ProRule" id="PRU00967"/>
    </source>
</evidence>
<evidence type="ECO:0000255" key="4">
    <source>
        <dbReference type="PROSITE-ProRule" id="PRU00968"/>
    </source>
</evidence>
<name>CYB_CEPWE</name>
<keyword id="KW-0249">Electron transport</keyword>
<keyword id="KW-0349">Heme</keyword>
<keyword id="KW-0408">Iron</keyword>
<keyword id="KW-0472">Membrane</keyword>
<keyword id="KW-0479">Metal-binding</keyword>
<keyword id="KW-0496">Mitochondrion</keyword>
<keyword id="KW-0999">Mitochondrion inner membrane</keyword>
<keyword id="KW-0679">Respiratory chain</keyword>
<keyword id="KW-0812">Transmembrane</keyword>
<keyword id="KW-1133">Transmembrane helix</keyword>
<keyword id="KW-0813">Transport</keyword>
<keyword id="KW-0830">Ubiquinone</keyword>
<dbReference type="EMBL" id="AF153902">
    <property type="protein sequence ID" value="AAK26690.1"/>
    <property type="molecule type" value="Genomic_DNA"/>
</dbReference>
<dbReference type="SMR" id="Q9B5Q4"/>
<dbReference type="GO" id="GO:0005743">
    <property type="term" value="C:mitochondrial inner membrane"/>
    <property type="evidence" value="ECO:0007669"/>
    <property type="project" value="UniProtKB-SubCell"/>
</dbReference>
<dbReference type="GO" id="GO:0045275">
    <property type="term" value="C:respiratory chain complex III"/>
    <property type="evidence" value="ECO:0007669"/>
    <property type="project" value="InterPro"/>
</dbReference>
<dbReference type="GO" id="GO:0046872">
    <property type="term" value="F:metal ion binding"/>
    <property type="evidence" value="ECO:0007669"/>
    <property type="project" value="UniProtKB-KW"/>
</dbReference>
<dbReference type="GO" id="GO:0008121">
    <property type="term" value="F:ubiquinol-cytochrome-c reductase activity"/>
    <property type="evidence" value="ECO:0007669"/>
    <property type="project" value="InterPro"/>
</dbReference>
<dbReference type="GO" id="GO:0006122">
    <property type="term" value="P:mitochondrial electron transport, ubiquinol to cytochrome c"/>
    <property type="evidence" value="ECO:0007669"/>
    <property type="project" value="TreeGrafter"/>
</dbReference>
<dbReference type="CDD" id="cd00290">
    <property type="entry name" value="cytochrome_b_C"/>
    <property type="match status" value="1"/>
</dbReference>
<dbReference type="CDD" id="cd00284">
    <property type="entry name" value="Cytochrome_b_N"/>
    <property type="match status" value="1"/>
</dbReference>
<dbReference type="FunFam" id="1.20.810.10:FF:000002">
    <property type="entry name" value="Cytochrome b"/>
    <property type="match status" value="1"/>
</dbReference>
<dbReference type="Gene3D" id="1.20.810.10">
    <property type="entry name" value="Cytochrome Bc1 Complex, Chain C"/>
    <property type="match status" value="1"/>
</dbReference>
<dbReference type="InterPro" id="IPR005798">
    <property type="entry name" value="Cyt_b/b6_C"/>
</dbReference>
<dbReference type="InterPro" id="IPR036150">
    <property type="entry name" value="Cyt_b/b6_C_sf"/>
</dbReference>
<dbReference type="InterPro" id="IPR005797">
    <property type="entry name" value="Cyt_b/b6_N"/>
</dbReference>
<dbReference type="InterPro" id="IPR027387">
    <property type="entry name" value="Cytb/b6-like_sf"/>
</dbReference>
<dbReference type="InterPro" id="IPR030689">
    <property type="entry name" value="Cytochrome_b"/>
</dbReference>
<dbReference type="InterPro" id="IPR048260">
    <property type="entry name" value="Cytochrome_b_C_euk/bac"/>
</dbReference>
<dbReference type="InterPro" id="IPR048259">
    <property type="entry name" value="Cytochrome_b_N_euk/bac"/>
</dbReference>
<dbReference type="InterPro" id="IPR016174">
    <property type="entry name" value="Di-haem_cyt_TM"/>
</dbReference>
<dbReference type="PANTHER" id="PTHR19271">
    <property type="entry name" value="CYTOCHROME B"/>
    <property type="match status" value="1"/>
</dbReference>
<dbReference type="PANTHER" id="PTHR19271:SF16">
    <property type="entry name" value="CYTOCHROME B"/>
    <property type="match status" value="1"/>
</dbReference>
<dbReference type="Pfam" id="PF00032">
    <property type="entry name" value="Cytochrom_B_C"/>
    <property type="match status" value="1"/>
</dbReference>
<dbReference type="Pfam" id="PF00033">
    <property type="entry name" value="Cytochrome_B"/>
    <property type="match status" value="1"/>
</dbReference>
<dbReference type="PIRSF" id="PIRSF038885">
    <property type="entry name" value="COB"/>
    <property type="match status" value="1"/>
</dbReference>
<dbReference type="SUPFAM" id="SSF81648">
    <property type="entry name" value="a domain/subunit of cytochrome bc1 complex (Ubiquinol-cytochrome c reductase)"/>
    <property type="match status" value="1"/>
</dbReference>
<dbReference type="SUPFAM" id="SSF81342">
    <property type="entry name" value="Transmembrane di-heme cytochromes"/>
    <property type="match status" value="1"/>
</dbReference>
<dbReference type="PROSITE" id="PS51003">
    <property type="entry name" value="CYTB_CTER"/>
    <property type="match status" value="1"/>
</dbReference>
<dbReference type="PROSITE" id="PS51002">
    <property type="entry name" value="CYTB_NTER"/>
    <property type="match status" value="1"/>
</dbReference>
<sequence length="379" mass="42729">MTNIRKTHPLLKIVNNAFIDLPAPSNISSWWNFGSLLGICLILQILTGLFLAMHYTADTTTAFSSVTHICRDVNYGWIIRYMHANGASMFFICLFMHVGRGLYYGSYTYMETWNIGVILLFATMATAFMGYVLPWGQMSFWGATVITNLLSAIPYIGTNLVEWIWGGFSVDKATLTRFFAFHFIFPFIIAALAMVHLLFLHETGSNNPTGISSDADKIPFHPYYTIKDILGALLLILALMILVLFSPDLLGDPDNYTPANPLNTPPHIKPEWYFLFAYAILRSIPNKLGGVLALVLSILILVLMPLLHTSKQRSMMFRPISQCLFWILVADLLTLTWIGGQPVEHPYIIIGQLASIMYFLLILVLMPMASTIENNLLKW</sequence>
<geneLocation type="mitochondrion"/>